<feature type="peptide" id="PRO_0000420515" description="Corazonin" evidence="3">
    <location>
        <begin position="1"/>
        <end position="11"/>
    </location>
</feature>
<feature type="modified residue" description="Pyrrolidone carboxylic acid" evidence="3">
    <location>
        <position position="1"/>
    </location>
</feature>
<feature type="modified residue" description="Asparagine amide" evidence="3">
    <location>
        <position position="11"/>
    </location>
</feature>
<organism>
    <name type="scientific">Namaquaphasma ookiepense</name>
    <name type="common">Gladiator bug</name>
    <dbReference type="NCBI Taxonomy" id="409167"/>
    <lineage>
        <taxon>Eukaryota</taxon>
        <taxon>Metazoa</taxon>
        <taxon>Ecdysozoa</taxon>
        <taxon>Arthropoda</taxon>
        <taxon>Hexapoda</taxon>
        <taxon>Insecta</taxon>
        <taxon>Pterygota</taxon>
        <taxon>Neoptera</taxon>
        <taxon>Polyneoptera</taxon>
        <taxon>Mantophasmatodea</taxon>
        <taxon>Austrophasmatidae</taxon>
        <taxon>Namaquaphasma</taxon>
    </lineage>
</organism>
<protein>
    <recommendedName>
        <fullName evidence="4">Corazonin</fullName>
    </recommendedName>
</protein>
<accession>B0M2U7</accession>
<sequence>QTFHYSQGWTN</sequence>
<keyword id="KW-0027">Amidation</keyword>
<keyword id="KW-0903">Direct protein sequencing</keyword>
<keyword id="KW-0527">Neuropeptide</keyword>
<keyword id="KW-0873">Pyrrolidone carboxylic acid</keyword>
<keyword id="KW-0964">Secreted</keyword>
<reference evidence="5" key="1">
    <citation type="journal article" date="2012" name="Syst. Biol.">
        <title>Peptidomics-based phylogeny and biogeography of Mantophasmatodea (Hexapoda).</title>
        <authorList>
            <person name="Predel R."/>
            <person name="Neupert S."/>
            <person name="Huetteroth W."/>
            <person name="Kahnt J."/>
            <person name="Waidelich D."/>
            <person name="Roth S."/>
        </authorList>
    </citation>
    <scope>PROTEIN SEQUENCE</scope>
    <scope>PYROGLUTAMATE FORMATION AT GLN-1</scope>
    <scope>AMIDATION AT ASN-11</scope>
    <source>
        <tissue evidence="3">Corpora cardiaca</tissue>
    </source>
</reference>
<comment type="function">
    <text evidence="1">Cardioactive peptide. Corazonin is probably involved in the physiological regulation of the heart beat (By similarity).</text>
</comment>
<comment type="subcellular location">
    <subcellularLocation>
        <location evidence="6">Secreted</location>
    </subcellularLocation>
</comment>
<comment type="similarity">
    <text evidence="2">Belongs to the corazonin family.</text>
</comment>
<proteinExistence type="evidence at protein level"/>
<name>CORZ_NAMOO</name>
<dbReference type="GO" id="GO:0005576">
    <property type="term" value="C:extracellular region"/>
    <property type="evidence" value="ECO:0007669"/>
    <property type="project" value="UniProtKB-SubCell"/>
</dbReference>
<dbReference type="GO" id="GO:0007218">
    <property type="term" value="P:neuropeptide signaling pathway"/>
    <property type="evidence" value="ECO:0007669"/>
    <property type="project" value="UniProtKB-KW"/>
</dbReference>
<evidence type="ECO:0000250" key="1">
    <source>
        <dbReference type="UniProtKB" id="Q26377"/>
    </source>
</evidence>
<evidence type="ECO:0000255" key="2"/>
<evidence type="ECO:0000269" key="3">
    <source>
    </source>
</evidence>
<evidence type="ECO:0000303" key="4">
    <source>
    </source>
</evidence>
<evidence type="ECO:0000305" key="5"/>
<evidence type="ECO:0000305" key="6">
    <source>
    </source>
</evidence>